<protein>
    <recommendedName>
        <fullName evidence="1">ATP-dependent Clp protease proteolytic subunit</fullName>
        <ecNumber evidence="1">3.4.21.92</ecNumber>
    </recommendedName>
    <alternativeName>
        <fullName evidence="1">Endopeptidase Clp</fullName>
    </alternativeName>
</protein>
<feature type="chain" id="PRO_1000189629" description="ATP-dependent Clp protease proteolytic subunit">
    <location>
        <begin position="1"/>
        <end position="207"/>
    </location>
</feature>
<feature type="active site" description="Nucleophile" evidence="1">
    <location>
        <position position="111"/>
    </location>
</feature>
<feature type="active site" evidence="1">
    <location>
        <position position="136"/>
    </location>
</feature>
<evidence type="ECO:0000255" key="1">
    <source>
        <dbReference type="HAMAP-Rule" id="MF_00444"/>
    </source>
</evidence>
<dbReference type="EC" id="3.4.21.92" evidence="1"/>
<dbReference type="EMBL" id="FM178379">
    <property type="protein sequence ID" value="CAQ78503.1"/>
    <property type="molecule type" value="Genomic_DNA"/>
</dbReference>
<dbReference type="RefSeq" id="WP_012549607.1">
    <property type="nucleotide sequence ID" value="NC_011312.1"/>
</dbReference>
<dbReference type="SMR" id="B6EHK3"/>
<dbReference type="MEROPS" id="S14.001"/>
<dbReference type="GeneID" id="56274469"/>
<dbReference type="KEGG" id="vsa:VSAL_I0818"/>
<dbReference type="eggNOG" id="COG0740">
    <property type="taxonomic scope" value="Bacteria"/>
</dbReference>
<dbReference type="HOGENOM" id="CLU_058707_3_2_6"/>
<dbReference type="Proteomes" id="UP000001730">
    <property type="component" value="Chromosome 1"/>
</dbReference>
<dbReference type="GO" id="GO:0005737">
    <property type="term" value="C:cytoplasm"/>
    <property type="evidence" value="ECO:0007669"/>
    <property type="project" value="UniProtKB-SubCell"/>
</dbReference>
<dbReference type="GO" id="GO:0009368">
    <property type="term" value="C:endopeptidase Clp complex"/>
    <property type="evidence" value="ECO:0007669"/>
    <property type="project" value="TreeGrafter"/>
</dbReference>
<dbReference type="GO" id="GO:0004176">
    <property type="term" value="F:ATP-dependent peptidase activity"/>
    <property type="evidence" value="ECO:0007669"/>
    <property type="project" value="InterPro"/>
</dbReference>
<dbReference type="GO" id="GO:0051117">
    <property type="term" value="F:ATPase binding"/>
    <property type="evidence" value="ECO:0007669"/>
    <property type="project" value="TreeGrafter"/>
</dbReference>
<dbReference type="GO" id="GO:0004252">
    <property type="term" value="F:serine-type endopeptidase activity"/>
    <property type="evidence" value="ECO:0007669"/>
    <property type="project" value="UniProtKB-UniRule"/>
</dbReference>
<dbReference type="GO" id="GO:0006515">
    <property type="term" value="P:protein quality control for misfolded or incompletely synthesized proteins"/>
    <property type="evidence" value="ECO:0007669"/>
    <property type="project" value="TreeGrafter"/>
</dbReference>
<dbReference type="CDD" id="cd07017">
    <property type="entry name" value="S14_ClpP_2"/>
    <property type="match status" value="1"/>
</dbReference>
<dbReference type="FunFam" id="3.90.226.10:FF:000001">
    <property type="entry name" value="ATP-dependent Clp protease proteolytic subunit"/>
    <property type="match status" value="1"/>
</dbReference>
<dbReference type="Gene3D" id="3.90.226.10">
    <property type="entry name" value="2-enoyl-CoA Hydratase, Chain A, domain 1"/>
    <property type="match status" value="1"/>
</dbReference>
<dbReference type="HAMAP" id="MF_00444">
    <property type="entry name" value="ClpP"/>
    <property type="match status" value="1"/>
</dbReference>
<dbReference type="InterPro" id="IPR001907">
    <property type="entry name" value="ClpP"/>
</dbReference>
<dbReference type="InterPro" id="IPR029045">
    <property type="entry name" value="ClpP/crotonase-like_dom_sf"/>
</dbReference>
<dbReference type="InterPro" id="IPR023562">
    <property type="entry name" value="ClpP/TepA"/>
</dbReference>
<dbReference type="InterPro" id="IPR033135">
    <property type="entry name" value="ClpP_His_AS"/>
</dbReference>
<dbReference type="InterPro" id="IPR018215">
    <property type="entry name" value="ClpP_Ser_AS"/>
</dbReference>
<dbReference type="NCBIfam" id="TIGR00493">
    <property type="entry name" value="clpP"/>
    <property type="match status" value="1"/>
</dbReference>
<dbReference type="NCBIfam" id="NF001368">
    <property type="entry name" value="PRK00277.1"/>
    <property type="match status" value="1"/>
</dbReference>
<dbReference type="NCBIfam" id="NF009205">
    <property type="entry name" value="PRK12553.1"/>
    <property type="match status" value="1"/>
</dbReference>
<dbReference type="PANTHER" id="PTHR10381">
    <property type="entry name" value="ATP-DEPENDENT CLP PROTEASE PROTEOLYTIC SUBUNIT"/>
    <property type="match status" value="1"/>
</dbReference>
<dbReference type="PANTHER" id="PTHR10381:SF70">
    <property type="entry name" value="ATP-DEPENDENT CLP PROTEASE PROTEOLYTIC SUBUNIT"/>
    <property type="match status" value="1"/>
</dbReference>
<dbReference type="Pfam" id="PF00574">
    <property type="entry name" value="CLP_protease"/>
    <property type="match status" value="1"/>
</dbReference>
<dbReference type="PRINTS" id="PR00127">
    <property type="entry name" value="CLPPROTEASEP"/>
</dbReference>
<dbReference type="SUPFAM" id="SSF52096">
    <property type="entry name" value="ClpP/crotonase"/>
    <property type="match status" value="1"/>
</dbReference>
<dbReference type="PROSITE" id="PS00382">
    <property type="entry name" value="CLP_PROTEASE_HIS"/>
    <property type="match status" value="1"/>
</dbReference>
<dbReference type="PROSITE" id="PS00381">
    <property type="entry name" value="CLP_PROTEASE_SER"/>
    <property type="match status" value="1"/>
</dbReference>
<accession>B6EHK3</accession>
<reference key="1">
    <citation type="journal article" date="2008" name="BMC Genomics">
        <title>The genome sequence of the fish pathogen Aliivibrio salmonicida strain LFI1238 shows extensive evidence of gene decay.</title>
        <authorList>
            <person name="Hjerde E."/>
            <person name="Lorentzen M.S."/>
            <person name="Holden M.T."/>
            <person name="Seeger K."/>
            <person name="Paulsen S."/>
            <person name="Bason N."/>
            <person name="Churcher C."/>
            <person name="Harris D."/>
            <person name="Norbertczak H."/>
            <person name="Quail M.A."/>
            <person name="Sanders S."/>
            <person name="Thurston S."/>
            <person name="Parkhill J."/>
            <person name="Willassen N.P."/>
            <person name="Thomson N.R."/>
        </authorList>
    </citation>
    <scope>NUCLEOTIDE SEQUENCE [LARGE SCALE GENOMIC DNA]</scope>
    <source>
        <strain>LFI1238</strain>
    </source>
</reference>
<keyword id="KW-0963">Cytoplasm</keyword>
<keyword id="KW-0378">Hydrolase</keyword>
<keyword id="KW-0645">Protease</keyword>
<keyword id="KW-0720">Serine protease</keyword>
<organism>
    <name type="scientific">Aliivibrio salmonicida (strain LFI1238)</name>
    <name type="common">Vibrio salmonicida (strain LFI1238)</name>
    <dbReference type="NCBI Taxonomy" id="316275"/>
    <lineage>
        <taxon>Bacteria</taxon>
        <taxon>Pseudomonadati</taxon>
        <taxon>Pseudomonadota</taxon>
        <taxon>Gammaproteobacteria</taxon>
        <taxon>Vibrionales</taxon>
        <taxon>Vibrionaceae</taxon>
        <taxon>Aliivibrio</taxon>
    </lineage>
</organism>
<sequence length="207" mass="22859">MSYQENNAMPSIMDALVPMVVEQTSRGERSYDIYSRLLKERVIFLTGQVEDHMANLVVAQLLFLESENPDKDIFLYINSPGGSVTAGMSIYDTMQFIKPNVSTVCMGQACSMGAFLLAGGAPGKRYVLPNSRVMIHQPLGGFQGQASDIQIHAQEILTIKKKLNTLLAEHTGQPLEVIEKDTDRDNFMAADDAVKYGLVDAVLNKRD</sequence>
<name>CLPP_ALISL</name>
<comment type="function">
    <text evidence="1">Cleaves peptides in various proteins in a process that requires ATP hydrolysis. Has a chymotrypsin-like activity. Plays a major role in the degradation of misfolded proteins.</text>
</comment>
<comment type="catalytic activity">
    <reaction evidence="1">
        <text>Hydrolysis of proteins to small peptides in the presence of ATP and magnesium. alpha-casein is the usual test substrate. In the absence of ATP, only oligopeptides shorter than five residues are hydrolyzed (such as succinyl-Leu-Tyr-|-NHMec, and Leu-Tyr-Leu-|-Tyr-Trp, in which cleavage of the -Tyr-|-Leu- and -Tyr-|-Trp bonds also occurs).</text>
        <dbReference type="EC" id="3.4.21.92"/>
    </reaction>
</comment>
<comment type="subunit">
    <text evidence="1">Fourteen ClpP subunits assemble into 2 heptameric rings which stack back to back to give a disk-like structure with a central cavity, resembling the structure of eukaryotic proteasomes.</text>
</comment>
<comment type="subcellular location">
    <subcellularLocation>
        <location evidence="1">Cytoplasm</location>
    </subcellularLocation>
</comment>
<comment type="similarity">
    <text evidence="1">Belongs to the peptidase S14 family.</text>
</comment>
<gene>
    <name evidence="1" type="primary">clpP</name>
    <name type="ordered locus">VSAL_I0818</name>
</gene>
<proteinExistence type="inferred from homology"/>